<evidence type="ECO:0000255" key="1">
    <source>
        <dbReference type="HAMAP-Rule" id="MF_00147"/>
    </source>
</evidence>
<evidence type="ECO:0000269" key="2">
    <source>
    </source>
</evidence>
<evidence type="ECO:0000269" key="3">
    <source>
    </source>
</evidence>
<evidence type="ECO:0000269" key="4">
    <source>
    </source>
</evidence>
<evidence type="ECO:0000269" key="5">
    <source>
    </source>
</evidence>
<evidence type="ECO:0000269" key="6">
    <source>
    </source>
</evidence>
<evidence type="ECO:0000269" key="7">
    <source>
    </source>
</evidence>
<evidence type="ECO:0000269" key="8">
    <source>
    </source>
</evidence>
<evidence type="ECO:0000269" key="9">
    <source>
    </source>
</evidence>
<evidence type="ECO:0000303" key="10">
    <source>
    </source>
</evidence>
<evidence type="ECO:0000303" key="11">
    <source>
    </source>
</evidence>
<evidence type="ECO:0000305" key="12"/>
<evidence type="ECO:0007829" key="13">
    <source>
        <dbReference type="PDB" id="1TRE"/>
    </source>
</evidence>
<gene>
    <name evidence="1 11" type="primary">tpiA</name>
    <name type="synonym">tpi</name>
    <name type="ordered locus">b3919</name>
    <name type="ordered locus">JW3890</name>
</gene>
<comment type="function">
    <text evidence="1 9">Involved in the gluconeogenesis. Catalyzes stereospecifically the conversion of dihydroxyacetone phosphate (DHAP) to D-glyceraldehyde-3-phosphate (G3P).</text>
</comment>
<comment type="catalytic activity">
    <reaction evidence="1 5 9">
        <text>D-glyceraldehyde 3-phosphate = dihydroxyacetone phosphate</text>
        <dbReference type="Rhea" id="RHEA:18585"/>
        <dbReference type="ChEBI" id="CHEBI:57642"/>
        <dbReference type="ChEBI" id="CHEBI:59776"/>
        <dbReference type="EC" id="5.3.1.1"/>
    </reaction>
</comment>
<comment type="biophysicochemical properties">
    <kinetics>
        <KM evidence="9">1030 uM for D-glyceraldehyde 3-phosphate (at 25 degrees Celsius)</KM>
        <text evidence="9">kcat is 54000 min(-1) for isomerase activity with D-glyceraldehyde 3-phosphate as substrate (at 25 degrees Celsius).</text>
    </kinetics>
</comment>
<comment type="pathway">
    <text evidence="1">Carbohydrate biosynthesis; gluconeogenesis.</text>
</comment>
<comment type="pathway">
    <text evidence="1">Carbohydrate degradation; glycolysis; D-glyceraldehyde 3-phosphate from glycerone phosphate: step 1/1.</text>
</comment>
<comment type="subunit">
    <text evidence="1 2 7 8">Homodimer.</text>
</comment>
<comment type="interaction">
    <interactant intactId="EBI-368978">
        <id>P0A858</id>
    </interactant>
    <interactant intactId="EBI-555639">
        <id>P29745</id>
        <label>pepT</label>
    </interactant>
    <organismsDiffer>false</organismsDiffer>
    <experiments>7</experiments>
</comment>
<comment type="interaction">
    <interactant intactId="EBI-368978">
        <id>P0A858</id>
    </interactant>
    <interactant intactId="EBI-546682">
        <id>P09373</id>
        <label>pflB</label>
    </interactant>
    <organismsDiffer>false</organismsDiffer>
    <experiments>7</experiments>
</comment>
<comment type="interaction">
    <interactant intactId="EBI-368978">
        <id>P0A858</id>
    </interactant>
    <interactant intactId="EBI-368978">
        <id>P0A858</id>
        <label>tpiA</label>
    </interactant>
    <organismsDiffer>false</organismsDiffer>
    <experiments>3</experiments>
</comment>
<comment type="subcellular location">
    <subcellularLocation>
        <location evidence="1 12">Cytoplasm</location>
    </subcellularLocation>
</comment>
<comment type="induction">
    <text evidence="3 6">Induced by CsrA and repressed by spermidine.</text>
</comment>
<comment type="disruption phenotype">
    <text evidence="4">Cells lacking this gene accumulates methylglyoxal and are unable to grow on glucose, lactate or other carbon sources.</text>
</comment>
<comment type="similarity">
    <text evidence="1">Belongs to the triosephosphate isomerase family.</text>
</comment>
<name>TPIS_ECOLI</name>
<organism>
    <name type="scientific">Escherichia coli (strain K12)</name>
    <dbReference type="NCBI Taxonomy" id="83333"/>
    <lineage>
        <taxon>Bacteria</taxon>
        <taxon>Pseudomonadati</taxon>
        <taxon>Pseudomonadota</taxon>
        <taxon>Gammaproteobacteria</taxon>
        <taxon>Enterobacterales</taxon>
        <taxon>Enterobacteriaceae</taxon>
        <taxon>Escherichia</taxon>
    </lineage>
</organism>
<accession>P0A858</accession>
<accession>P04790</accession>
<accession>Q2M8L5</accession>
<sequence length="255" mass="26972">MRHPLVMGNWKLNGSRHMVHELVSNLRKELAGVAGCAVAIAPPEMYIDMAKREAEGSHIMLGAQNVDLNLSGAFTGETSAAMLKDIGAQYIIIGHSERRTYHKESDELIAKKFAVLKEQGLTPVLCIGETEAENEAGKTEEVCARQIDAVLKTQGAAAFEGAVIAYEPVWAIGTGKSATPAQAQAVHKFIRDHIAKVDANIAEQVIIQYGGSVNASNAAELFAQPDIDGALVGGASLKADAFAVIVKAAEAAKQA</sequence>
<keyword id="KW-0002">3D-structure</keyword>
<keyword id="KW-0963">Cytoplasm</keyword>
<keyword id="KW-0903">Direct protein sequencing</keyword>
<keyword id="KW-0312">Gluconeogenesis</keyword>
<keyword id="KW-0324">Glycolysis</keyword>
<keyword id="KW-0413">Isomerase</keyword>
<keyword id="KW-1185">Reference proteome</keyword>
<proteinExistence type="evidence at protein level"/>
<protein>
    <recommendedName>
        <fullName evidence="1 11">Triosephosphate isomerase</fullName>
        <shortName evidence="1 10">TIM</shortName>
        <shortName evidence="1 11">TPI</shortName>
        <ecNumber evidence="1 5 9">5.3.1.1</ecNumber>
    </recommendedName>
    <alternativeName>
        <fullName evidence="1">Triose-phosphate isomerase</fullName>
    </alternativeName>
</protein>
<reference key="1">
    <citation type="journal article" date="1984" name="Mol. Gen. Genet.">
        <title>Nucleotide sequence of the triose phosphate isomerase gene of Escherichia coli.</title>
        <authorList>
            <person name="Pichersky E."/>
            <person name="Gottlieb L.D."/>
            <person name="Hess J.F."/>
        </authorList>
    </citation>
    <scope>NUCLEOTIDE SEQUENCE [GENOMIC DNA]</scope>
    <scope>CATALYTIC ACTIVITY</scope>
</reference>
<reference key="2">
    <citation type="journal article" date="1993" name="Nucleic Acids Res.">
        <title>Analysis of the Escherichia coli genome. III. DNA sequence of the region from 87.2 to 89.2 minutes.</title>
        <authorList>
            <person name="Plunkett G. III"/>
            <person name="Burland V."/>
            <person name="Daniels D.L."/>
            <person name="Blattner F.R."/>
        </authorList>
    </citation>
    <scope>NUCLEOTIDE SEQUENCE [LARGE SCALE GENOMIC DNA]</scope>
    <source>
        <strain>K12 / MG1655 / ATCC 47076</strain>
    </source>
</reference>
<reference key="3">
    <citation type="journal article" date="1997" name="Science">
        <title>The complete genome sequence of Escherichia coli K-12.</title>
        <authorList>
            <person name="Blattner F.R."/>
            <person name="Plunkett G. III"/>
            <person name="Bloch C.A."/>
            <person name="Perna N.T."/>
            <person name="Burland V."/>
            <person name="Riley M."/>
            <person name="Collado-Vides J."/>
            <person name="Glasner J.D."/>
            <person name="Rode C.K."/>
            <person name="Mayhew G.F."/>
            <person name="Gregor J."/>
            <person name="Davis N.W."/>
            <person name="Kirkpatrick H.A."/>
            <person name="Goeden M.A."/>
            <person name="Rose D.J."/>
            <person name="Mau B."/>
            <person name="Shao Y."/>
        </authorList>
    </citation>
    <scope>NUCLEOTIDE SEQUENCE [LARGE SCALE GENOMIC DNA]</scope>
    <source>
        <strain>K12 / MG1655 / ATCC 47076</strain>
    </source>
</reference>
<reference key="4">
    <citation type="journal article" date="2006" name="Mol. Syst. Biol.">
        <title>Highly accurate genome sequences of Escherichia coli K-12 strains MG1655 and W3110.</title>
        <authorList>
            <person name="Hayashi K."/>
            <person name="Morooka N."/>
            <person name="Yamamoto Y."/>
            <person name="Fujita K."/>
            <person name="Isono K."/>
            <person name="Choi S."/>
            <person name="Ohtsubo E."/>
            <person name="Baba T."/>
            <person name="Wanner B.L."/>
            <person name="Mori H."/>
            <person name="Horiuchi T."/>
        </authorList>
    </citation>
    <scope>NUCLEOTIDE SEQUENCE [LARGE SCALE GENOMIC DNA]</scope>
    <source>
        <strain>K12 / W3110 / ATCC 27325 / DSM 5911</strain>
    </source>
</reference>
<reference key="5">
    <citation type="submission" date="1994-09" db="UniProtKB">
        <authorList>
            <person name="Pasquali C."/>
            <person name="Sanchez J.-C."/>
            <person name="Ravier F."/>
            <person name="Golaz O."/>
            <person name="Hughes G.J."/>
            <person name="Frutiger S."/>
            <person name="Paquet N."/>
            <person name="Wilkins M."/>
            <person name="Appel R.D."/>
            <person name="Bairoch A."/>
            <person name="Hochstrasser D.F."/>
        </authorList>
    </citation>
    <scope>PROTEIN SEQUENCE OF 1-9</scope>
    <source>
        <strain>K12 / W3110 / ATCC 27325 / DSM 5911</strain>
    </source>
</reference>
<reference key="6">
    <citation type="journal article" date="1997" name="Electrophoresis">
        <title>Comparing the predicted and observed properties of proteins encoded in the genome of Escherichia coli K-12.</title>
        <authorList>
            <person name="Link A.J."/>
            <person name="Robison K."/>
            <person name="Church G.M."/>
        </authorList>
    </citation>
    <scope>PROTEIN SEQUENCE OF 1-14</scope>
    <source>
        <strain>K12 / EMG2</strain>
    </source>
</reference>
<reference key="7">
    <citation type="journal article" date="2007" name="Genes Genet. Syst.">
        <title>A role of RnlA in the RNase LS activity from Escherichia coli.</title>
        <authorList>
            <person name="Otsuka Y."/>
            <person name="Koga M."/>
            <person name="Iwamoto A."/>
            <person name="Yonesaki T."/>
        </authorList>
    </citation>
    <scope>PROTEIN SEQUENCE OF 1-8</scope>
    <source>
        <strain>K12</strain>
    </source>
</reference>
<reference key="8">
    <citation type="journal article" date="1998" name="J. Mol. Biol.">
        <title>Protein identification with N and C-terminal sequence tags in proteome projects.</title>
        <authorList>
            <person name="Wilkins M.R."/>
            <person name="Gasteiger E."/>
            <person name="Tonella L."/>
            <person name="Ou K."/>
            <person name="Tyler M."/>
            <person name="Sanchez J.-C."/>
            <person name="Gooley A.A."/>
            <person name="Walsh B.J."/>
            <person name="Bairoch A."/>
            <person name="Appel R.D."/>
            <person name="Williams K.L."/>
            <person name="Hochstrasser D.F."/>
        </authorList>
    </citation>
    <scope>PROTEIN SEQUENCE OF 1-4</scope>
    <source>
        <strain>K12 / W3110 / ATCC 27325 / DSM 5911</strain>
    </source>
</reference>
<reference key="9">
    <citation type="journal article" date="1995" name="J. Biol. Chem.">
        <title>Pleiotropic regulation of central carbohydrate metabolism in Escherichia coli via the gene csrA.</title>
        <authorList>
            <person name="Sabnis N.A."/>
            <person name="Yang H."/>
            <person name="Romeo T."/>
        </authorList>
    </citation>
    <scope>INDUCTION</scope>
</reference>
<reference key="10">
    <citation type="journal article" date="1998" name="J. Biol. Chem.">
        <title>Triose-phosphate isomerase (TIM) of the psychrophilic bacterium Vibrio marinus. Kinetic and structural properties.</title>
        <authorList>
            <person name="Alvarez M."/>
            <person name="Zeelen J.P."/>
            <person name="Mainfroid V."/>
            <person name="Rentier-Delrue F."/>
            <person name="Martial J.A."/>
            <person name="Wyns L."/>
            <person name="Wierenga R.K."/>
            <person name="Maes D."/>
        </authorList>
    </citation>
    <scope>FUNCTION</scope>
    <scope>CATALYTIC ACTIVITY</scope>
    <scope>BIOPHYSICOCHEMICAL PROPERTIES</scope>
</reference>
<reference key="11">
    <citation type="journal article" date="2005" name="BMC Microbiol.">
        <title>Polyamine stress at high pH in Escherichia coli K-12.</title>
        <authorList>
            <person name="Yohannes E."/>
            <person name="Thurber A.E."/>
            <person name="Wilks J.C."/>
            <person name="Tate D.P."/>
            <person name="Slonczewski J.L."/>
        </authorList>
    </citation>
    <scope>INDUCTION</scope>
    <source>
        <strain>K12 / W3110</strain>
    </source>
</reference>
<reference key="12">
    <citation type="journal article" date="2014" name="Microb. Cell Fact.">
        <title>Antibiotic-free segregational plasmid stabilization in Escherichia coli owing to the knockout of triosephosphate isomerase (tpiA).</title>
        <authorList>
            <person name="Velur Selvamani R.S."/>
            <person name="Telaar M."/>
            <person name="Friehs K."/>
            <person name="Flaschel E."/>
        </authorList>
    </citation>
    <scope>DISRUPTION PHENOTYPE</scope>
    <source>
        <strain>K12 / BW25113</strain>
    </source>
</reference>
<reference key="13">
    <citation type="journal article" date="1993" name="Protein Eng.">
        <title>Replacing the (beta alpha)-unit 8 of E.coli TIM with its chicken homologue leads to a stable and active hybrid enzyme.</title>
        <authorList>
            <person name="Mainfroid V."/>
            <person name="Goraj K."/>
            <person name="Rentier-Delrue F."/>
            <person name="Houbrechts A."/>
            <person name="Loiseau A."/>
            <person name="Gohimont A.-C."/>
            <person name="Noble M.E.M."/>
            <person name="Borchert T.V."/>
            <person name="Wierenga R.K."/>
            <person name="Martial J.A."/>
        </authorList>
    </citation>
    <scope>X-RAY CRYSTALLOGRAPHY (2.6 ANGSTROMS)</scope>
    <scope>SUBUNIT</scope>
</reference>
<reference key="14">
    <citation type="journal article" date="1993" name="Acta Crystallogr. D">
        <title>Structure of triosephosphate isomerase from Escherichia coli determined at 2.6-A resolution.</title>
        <authorList>
            <person name="Noble M.E.M."/>
            <person name="Zeelen J.P."/>
            <person name="Wierenga R.K."/>
            <person name="Mainfroid V."/>
            <person name="Goraj K."/>
            <person name="Gohimont A.-C."/>
            <person name="Martial J.A."/>
        </authorList>
    </citation>
    <scope>X-RAY CRYSTALLOGRAPHY (2.6 ANGSTROMS)</scope>
    <scope>SUBUNIT</scope>
</reference>
<reference key="15">
    <citation type="journal article" date="1994" name="Protein Eng.">
        <title>Modular mutagenesis of a TIM-barrel enzyme: the crystal structure of a chimeric E. coli TIM having the eighth beta alpha-unit replaced by the equivalent unit of chicken TIM.</title>
        <authorList>
            <person name="Kishan R."/>
            <person name="Zeelen J.P."/>
            <person name="Noble M.E."/>
            <person name="Borchert T.V."/>
            <person name="Mainfroid V."/>
            <person name="Goraj K."/>
            <person name="Martial J.A."/>
            <person name="Wierenga R.K."/>
        </authorList>
    </citation>
    <scope>X-RAY CRYSTALLOGRAPHY (2.80 ANGSTROMS)</scope>
    <scope>SUBUNIT</scope>
</reference>
<dbReference type="EC" id="5.3.1.1" evidence="1 5 9"/>
<dbReference type="EMBL" id="X00617">
    <property type="protein sequence ID" value="CAA25253.1"/>
    <property type="molecule type" value="Genomic_DNA"/>
</dbReference>
<dbReference type="EMBL" id="L19201">
    <property type="protein sequence ID" value="AAB03051.1"/>
    <property type="molecule type" value="Genomic_DNA"/>
</dbReference>
<dbReference type="EMBL" id="U00096">
    <property type="protein sequence ID" value="AAC76901.1"/>
    <property type="molecule type" value="Genomic_DNA"/>
</dbReference>
<dbReference type="EMBL" id="AP009048">
    <property type="protein sequence ID" value="BAE77391.1"/>
    <property type="molecule type" value="Genomic_DNA"/>
</dbReference>
<dbReference type="PIR" id="B65198">
    <property type="entry name" value="ISECT"/>
</dbReference>
<dbReference type="RefSeq" id="NP_418354.1">
    <property type="nucleotide sequence ID" value="NC_000913.3"/>
</dbReference>
<dbReference type="RefSeq" id="WP_001216325.1">
    <property type="nucleotide sequence ID" value="NZ_STEB01000017.1"/>
</dbReference>
<dbReference type="PDB" id="1TMH">
    <property type="method" value="X-ray"/>
    <property type="resolution" value="2.80 A"/>
    <property type="chains" value="A/B/C/D=1-255"/>
</dbReference>
<dbReference type="PDB" id="1TRE">
    <property type="method" value="X-ray"/>
    <property type="resolution" value="2.60 A"/>
    <property type="chains" value="A/B=1-255"/>
</dbReference>
<dbReference type="PDBsum" id="1TMH"/>
<dbReference type="PDBsum" id="1TRE"/>
<dbReference type="SMR" id="P0A858"/>
<dbReference type="BioGRID" id="4262647">
    <property type="interactions" value="28"/>
</dbReference>
<dbReference type="BioGRID" id="852706">
    <property type="interactions" value="2"/>
</dbReference>
<dbReference type="DIP" id="DIP-31849N"/>
<dbReference type="FunCoup" id="P0A858">
    <property type="interactions" value="905"/>
</dbReference>
<dbReference type="IntAct" id="P0A858">
    <property type="interactions" value="28"/>
</dbReference>
<dbReference type="STRING" id="511145.b3919"/>
<dbReference type="jPOST" id="P0A858"/>
<dbReference type="PaxDb" id="511145-b3919"/>
<dbReference type="EnsemblBacteria" id="AAC76901">
    <property type="protein sequence ID" value="AAC76901"/>
    <property type="gene ID" value="b3919"/>
</dbReference>
<dbReference type="GeneID" id="93777979"/>
<dbReference type="GeneID" id="948409"/>
<dbReference type="KEGG" id="ecj:JW3890"/>
<dbReference type="KEGG" id="eco:b3919"/>
<dbReference type="KEGG" id="ecoc:C3026_21185"/>
<dbReference type="PATRIC" id="fig|1411691.4.peg.2786"/>
<dbReference type="EchoBASE" id="EB1008"/>
<dbReference type="eggNOG" id="COG0149">
    <property type="taxonomic scope" value="Bacteria"/>
</dbReference>
<dbReference type="HOGENOM" id="CLU_024251_2_1_6"/>
<dbReference type="InParanoid" id="P0A858"/>
<dbReference type="OMA" id="NWKMHMT"/>
<dbReference type="OrthoDB" id="9809429at2"/>
<dbReference type="PhylomeDB" id="P0A858"/>
<dbReference type="BioCyc" id="EcoCyc:TPI-MONOMER"/>
<dbReference type="BioCyc" id="MetaCyc:TPI-MONOMER"/>
<dbReference type="BRENDA" id="5.3.1.1">
    <property type="organism ID" value="2026"/>
</dbReference>
<dbReference type="SABIO-RK" id="P0A858"/>
<dbReference type="UniPathway" id="UPA00109">
    <property type="reaction ID" value="UER00189"/>
</dbReference>
<dbReference type="UniPathway" id="UPA00138"/>
<dbReference type="EvolutionaryTrace" id="P0A858"/>
<dbReference type="PRO" id="PR:P0A858"/>
<dbReference type="Proteomes" id="UP000000625">
    <property type="component" value="Chromosome"/>
</dbReference>
<dbReference type="GO" id="GO:0005829">
    <property type="term" value="C:cytosol"/>
    <property type="evidence" value="ECO:0000314"/>
    <property type="project" value="EcoCyc"/>
</dbReference>
<dbReference type="GO" id="GO:0016020">
    <property type="term" value="C:membrane"/>
    <property type="evidence" value="ECO:0007005"/>
    <property type="project" value="UniProtKB"/>
</dbReference>
<dbReference type="GO" id="GO:0042802">
    <property type="term" value="F:identical protein binding"/>
    <property type="evidence" value="ECO:0000353"/>
    <property type="project" value="IntAct"/>
</dbReference>
<dbReference type="GO" id="GO:0004807">
    <property type="term" value="F:triose-phosphate isomerase activity"/>
    <property type="evidence" value="ECO:0000314"/>
    <property type="project" value="EcoCyc"/>
</dbReference>
<dbReference type="GO" id="GO:0006094">
    <property type="term" value="P:gluconeogenesis"/>
    <property type="evidence" value="ECO:0000315"/>
    <property type="project" value="EcoliWiki"/>
</dbReference>
<dbReference type="GO" id="GO:0046166">
    <property type="term" value="P:glyceraldehyde-3-phosphate biosynthetic process"/>
    <property type="evidence" value="ECO:0000318"/>
    <property type="project" value="GO_Central"/>
</dbReference>
<dbReference type="GO" id="GO:0019563">
    <property type="term" value="P:glycerol catabolic process"/>
    <property type="evidence" value="ECO:0000318"/>
    <property type="project" value="GO_Central"/>
</dbReference>
<dbReference type="GO" id="GO:0006096">
    <property type="term" value="P:glycolytic process"/>
    <property type="evidence" value="ECO:0000315"/>
    <property type="project" value="EcoCyc"/>
</dbReference>
<dbReference type="CDD" id="cd00311">
    <property type="entry name" value="TIM"/>
    <property type="match status" value="1"/>
</dbReference>
<dbReference type="FunFam" id="3.20.20.70:FF:000020">
    <property type="entry name" value="Triosephosphate isomerase"/>
    <property type="match status" value="1"/>
</dbReference>
<dbReference type="Gene3D" id="3.20.20.70">
    <property type="entry name" value="Aldolase class I"/>
    <property type="match status" value="1"/>
</dbReference>
<dbReference type="HAMAP" id="MF_00147_B">
    <property type="entry name" value="TIM_B"/>
    <property type="match status" value="1"/>
</dbReference>
<dbReference type="InterPro" id="IPR013785">
    <property type="entry name" value="Aldolase_TIM"/>
</dbReference>
<dbReference type="InterPro" id="IPR035990">
    <property type="entry name" value="TIM_sf"/>
</dbReference>
<dbReference type="InterPro" id="IPR022896">
    <property type="entry name" value="TrioseP_Isoase_bac/euk"/>
</dbReference>
<dbReference type="InterPro" id="IPR000652">
    <property type="entry name" value="Triosephosphate_isomerase"/>
</dbReference>
<dbReference type="InterPro" id="IPR020861">
    <property type="entry name" value="Triosephosphate_isomerase_AS"/>
</dbReference>
<dbReference type="NCBIfam" id="TIGR00419">
    <property type="entry name" value="tim"/>
    <property type="match status" value="1"/>
</dbReference>
<dbReference type="PANTHER" id="PTHR21139">
    <property type="entry name" value="TRIOSEPHOSPHATE ISOMERASE"/>
    <property type="match status" value="1"/>
</dbReference>
<dbReference type="PANTHER" id="PTHR21139:SF42">
    <property type="entry name" value="TRIOSEPHOSPHATE ISOMERASE"/>
    <property type="match status" value="1"/>
</dbReference>
<dbReference type="Pfam" id="PF00121">
    <property type="entry name" value="TIM"/>
    <property type="match status" value="1"/>
</dbReference>
<dbReference type="SUPFAM" id="SSF51351">
    <property type="entry name" value="Triosephosphate isomerase (TIM)"/>
    <property type="match status" value="1"/>
</dbReference>
<dbReference type="PROSITE" id="PS00171">
    <property type="entry name" value="TIM_1"/>
    <property type="match status" value="1"/>
</dbReference>
<dbReference type="PROSITE" id="PS51440">
    <property type="entry name" value="TIM_2"/>
    <property type="match status" value="1"/>
</dbReference>
<feature type="chain" id="PRO_0000090217" description="Triosephosphate isomerase">
    <location>
        <begin position="1"/>
        <end position="255"/>
    </location>
</feature>
<feature type="active site" description="Electrophile" evidence="1">
    <location>
        <position position="95"/>
    </location>
</feature>
<feature type="active site" description="Proton acceptor" evidence="1">
    <location>
        <position position="167"/>
    </location>
</feature>
<feature type="binding site" evidence="1">
    <location>
        <begin position="9"/>
        <end position="11"/>
    </location>
    <ligand>
        <name>substrate</name>
    </ligand>
</feature>
<feature type="binding site" evidence="1">
    <location>
        <position position="173"/>
    </location>
    <ligand>
        <name>substrate</name>
    </ligand>
</feature>
<feature type="binding site" evidence="1">
    <location>
        <position position="212"/>
    </location>
    <ligand>
        <name>substrate</name>
    </ligand>
</feature>
<feature type="binding site" evidence="1">
    <location>
        <begin position="233"/>
        <end position="234"/>
    </location>
    <ligand>
        <name>substrate</name>
    </ligand>
</feature>
<feature type="sequence conflict" description="In Ref. 1; CAA25253." evidence="12" ref="1">
    <original>D</original>
    <variation>N</variation>
    <location>
        <position position="67"/>
    </location>
</feature>
<feature type="strand" evidence="13">
    <location>
        <begin position="5"/>
        <end position="9"/>
    </location>
</feature>
<feature type="helix" evidence="13">
    <location>
        <begin position="16"/>
        <end position="30"/>
    </location>
</feature>
<feature type="strand" evidence="13">
    <location>
        <begin position="37"/>
        <end position="41"/>
    </location>
</feature>
<feature type="turn" evidence="13">
    <location>
        <begin position="44"/>
        <end position="46"/>
    </location>
</feature>
<feature type="helix" evidence="13">
    <location>
        <begin position="47"/>
        <end position="54"/>
    </location>
</feature>
<feature type="strand" evidence="13">
    <location>
        <begin position="57"/>
        <end position="64"/>
    </location>
</feature>
<feature type="strand" evidence="13">
    <location>
        <begin position="70"/>
        <end position="73"/>
    </location>
</feature>
<feature type="helix" evidence="13">
    <location>
        <begin position="80"/>
        <end position="86"/>
    </location>
</feature>
<feature type="strand" evidence="13">
    <location>
        <begin position="90"/>
        <end position="94"/>
    </location>
</feature>
<feature type="helix" evidence="13">
    <location>
        <begin position="96"/>
        <end position="101"/>
    </location>
</feature>
<feature type="helix" evidence="13">
    <location>
        <begin position="106"/>
        <end position="118"/>
    </location>
</feature>
<feature type="strand" evidence="13">
    <location>
        <begin position="122"/>
        <end position="127"/>
    </location>
</feature>
<feature type="helix" evidence="13">
    <location>
        <begin position="131"/>
        <end position="135"/>
    </location>
</feature>
<feature type="helix" evidence="13">
    <location>
        <begin position="139"/>
        <end position="154"/>
    </location>
</feature>
<feature type="helix" evidence="13">
    <location>
        <begin position="156"/>
        <end position="159"/>
    </location>
</feature>
<feature type="strand" evidence="13">
    <location>
        <begin position="163"/>
        <end position="166"/>
    </location>
</feature>
<feature type="helix" evidence="13">
    <location>
        <begin position="169"/>
        <end position="171"/>
    </location>
</feature>
<feature type="strand" evidence="13">
    <location>
        <begin position="172"/>
        <end position="175"/>
    </location>
</feature>
<feature type="helix" evidence="13">
    <location>
        <begin position="180"/>
        <end position="204"/>
    </location>
</feature>
<feature type="strand" evidence="13">
    <location>
        <begin position="206"/>
        <end position="209"/>
    </location>
</feature>
<feature type="turn" evidence="13">
    <location>
        <begin position="215"/>
        <end position="217"/>
    </location>
</feature>
<feature type="helix" evidence="13">
    <location>
        <begin position="218"/>
        <end position="222"/>
    </location>
</feature>
<feature type="strand" evidence="13">
    <location>
        <begin position="229"/>
        <end position="233"/>
    </location>
</feature>
<feature type="helix" evidence="13">
    <location>
        <begin position="234"/>
        <end position="237"/>
    </location>
</feature>
<feature type="helix" evidence="13">
    <location>
        <begin position="239"/>
        <end position="253"/>
    </location>
</feature>